<reference key="1">
    <citation type="submission" date="1999-06" db="EMBL/GenBank/DDBJ databases">
        <title>Isolation of the ndhAIGE gene cluster of Anabaena sp. PCC 7120.</title>
        <authorList>
            <person name="Schiefer W."/>
            <person name="Happe T."/>
        </authorList>
    </citation>
    <scope>NUCLEOTIDE SEQUENCE [GENOMIC DNA]</scope>
</reference>
<reference key="2">
    <citation type="journal article" date="2001" name="DNA Res.">
        <title>Complete genomic sequence of the filamentous nitrogen-fixing cyanobacterium Anabaena sp. strain PCC 7120.</title>
        <authorList>
            <person name="Kaneko T."/>
            <person name="Nakamura Y."/>
            <person name="Wolk C.P."/>
            <person name="Kuritz T."/>
            <person name="Sasamoto S."/>
            <person name="Watanabe A."/>
            <person name="Iriguchi M."/>
            <person name="Ishikawa A."/>
            <person name="Kawashima K."/>
            <person name="Kimura T."/>
            <person name="Kishida Y."/>
            <person name="Kohara M."/>
            <person name="Matsumoto M."/>
            <person name="Matsuno A."/>
            <person name="Muraki A."/>
            <person name="Nakazaki N."/>
            <person name="Shimpo S."/>
            <person name="Sugimoto M."/>
            <person name="Takazawa M."/>
            <person name="Yamada M."/>
            <person name="Yasuda M."/>
            <person name="Tabata S."/>
        </authorList>
    </citation>
    <scope>NUCLEOTIDE SEQUENCE [LARGE SCALE GENOMIC DNA]</scope>
    <source>
        <strain>PCC 7120 / SAG 25.82 / UTEX 2576</strain>
    </source>
</reference>
<dbReference type="EC" id="7.1.1.-" evidence="1"/>
<dbReference type="EMBL" id="AJ242867">
    <property type="protein sequence ID" value="CAB44669.1"/>
    <property type="molecule type" value="Genomic_DNA"/>
</dbReference>
<dbReference type="EMBL" id="BA000019">
    <property type="protein sequence ID" value="BAB77748.1"/>
    <property type="molecule type" value="Genomic_DNA"/>
</dbReference>
<dbReference type="PIR" id="AH1834">
    <property type="entry name" value="AH1834"/>
</dbReference>
<dbReference type="RefSeq" id="WP_010994401.1">
    <property type="nucleotide sequence ID" value="NZ_RSCN01000026.1"/>
</dbReference>
<dbReference type="SMR" id="Q9WWM6"/>
<dbReference type="STRING" id="103690.gene:10492231"/>
<dbReference type="KEGG" id="ana:alr0224"/>
<dbReference type="eggNOG" id="COG1143">
    <property type="taxonomic scope" value="Bacteria"/>
</dbReference>
<dbReference type="OrthoDB" id="9798098at2"/>
<dbReference type="Proteomes" id="UP000002483">
    <property type="component" value="Chromosome"/>
</dbReference>
<dbReference type="GO" id="GO:0031676">
    <property type="term" value="C:plasma membrane-derived thylakoid membrane"/>
    <property type="evidence" value="ECO:0007669"/>
    <property type="project" value="UniProtKB-SubCell"/>
</dbReference>
<dbReference type="GO" id="GO:0051539">
    <property type="term" value="F:4 iron, 4 sulfur cluster binding"/>
    <property type="evidence" value="ECO:0007669"/>
    <property type="project" value="UniProtKB-KW"/>
</dbReference>
<dbReference type="GO" id="GO:0005506">
    <property type="term" value="F:iron ion binding"/>
    <property type="evidence" value="ECO:0007669"/>
    <property type="project" value="UniProtKB-UniRule"/>
</dbReference>
<dbReference type="GO" id="GO:0008137">
    <property type="term" value="F:NADH dehydrogenase (ubiquinone) activity"/>
    <property type="evidence" value="ECO:0007669"/>
    <property type="project" value="InterPro"/>
</dbReference>
<dbReference type="GO" id="GO:0048038">
    <property type="term" value="F:quinone binding"/>
    <property type="evidence" value="ECO:0007669"/>
    <property type="project" value="UniProtKB-KW"/>
</dbReference>
<dbReference type="GO" id="GO:0019684">
    <property type="term" value="P:photosynthesis, light reaction"/>
    <property type="evidence" value="ECO:0007669"/>
    <property type="project" value="UniProtKB-UniRule"/>
</dbReference>
<dbReference type="Gene3D" id="3.30.70.3270">
    <property type="match status" value="1"/>
</dbReference>
<dbReference type="HAMAP" id="MF_01351">
    <property type="entry name" value="NDH1_NuoI"/>
    <property type="match status" value="1"/>
</dbReference>
<dbReference type="InterPro" id="IPR017896">
    <property type="entry name" value="4Fe4S_Fe-S-bd"/>
</dbReference>
<dbReference type="InterPro" id="IPR017900">
    <property type="entry name" value="4Fe4S_Fe_S_CS"/>
</dbReference>
<dbReference type="InterPro" id="IPR010226">
    <property type="entry name" value="NADH_quinone_OxRdtase_chainI"/>
</dbReference>
<dbReference type="InterPro" id="IPR004497">
    <property type="entry name" value="NDHI"/>
</dbReference>
<dbReference type="NCBIfam" id="TIGR00403">
    <property type="entry name" value="ndhI"/>
    <property type="match status" value="1"/>
</dbReference>
<dbReference type="NCBIfam" id="TIGR01971">
    <property type="entry name" value="NuoI"/>
    <property type="match status" value="1"/>
</dbReference>
<dbReference type="NCBIfam" id="NF004537">
    <property type="entry name" value="PRK05888.1-3"/>
    <property type="match status" value="1"/>
</dbReference>
<dbReference type="PANTHER" id="PTHR47275">
    <property type="entry name" value="NAD(P)H-QUINONE OXIDOREDUCTASE SUBUNIT I, CHLOROPLASTIC"/>
    <property type="match status" value="1"/>
</dbReference>
<dbReference type="PANTHER" id="PTHR47275:SF1">
    <property type="entry name" value="NAD(P)H-QUINONE OXIDOREDUCTASE SUBUNIT I, CHLOROPLASTIC"/>
    <property type="match status" value="1"/>
</dbReference>
<dbReference type="Pfam" id="PF12838">
    <property type="entry name" value="Fer4_7"/>
    <property type="match status" value="1"/>
</dbReference>
<dbReference type="SUPFAM" id="SSF54862">
    <property type="entry name" value="4Fe-4S ferredoxins"/>
    <property type="match status" value="1"/>
</dbReference>
<dbReference type="PROSITE" id="PS00198">
    <property type="entry name" value="4FE4S_FER_1"/>
    <property type="match status" value="2"/>
</dbReference>
<dbReference type="PROSITE" id="PS51379">
    <property type="entry name" value="4FE4S_FER_2"/>
    <property type="match status" value="2"/>
</dbReference>
<keyword id="KW-0004">4Fe-4S</keyword>
<keyword id="KW-0408">Iron</keyword>
<keyword id="KW-0411">Iron-sulfur</keyword>
<keyword id="KW-0472">Membrane</keyword>
<keyword id="KW-0479">Metal-binding</keyword>
<keyword id="KW-0520">NAD</keyword>
<keyword id="KW-0521">NADP</keyword>
<keyword id="KW-0618">Plastoquinone</keyword>
<keyword id="KW-0874">Quinone</keyword>
<keyword id="KW-1185">Reference proteome</keyword>
<keyword id="KW-0677">Repeat</keyword>
<keyword id="KW-0793">Thylakoid</keyword>
<keyword id="KW-1278">Translocase</keyword>
<gene>
    <name evidence="1" type="primary">ndhI</name>
    <name type="ordered locus">alr0224</name>
</gene>
<name>NDHI_NOSS1</name>
<organism>
    <name type="scientific">Nostoc sp. (strain PCC 7120 / SAG 25.82 / UTEX 2576)</name>
    <dbReference type="NCBI Taxonomy" id="103690"/>
    <lineage>
        <taxon>Bacteria</taxon>
        <taxon>Bacillati</taxon>
        <taxon>Cyanobacteriota</taxon>
        <taxon>Cyanophyceae</taxon>
        <taxon>Nostocales</taxon>
        <taxon>Nostocaceae</taxon>
        <taxon>Nostoc</taxon>
    </lineage>
</organism>
<evidence type="ECO:0000255" key="1">
    <source>
        <dbReference type="HAMAP-Rule" id="MF_01351"/>
    </source>
</evidence>
<evidence type="ECO:0000256" key="2">
    <source>
        <dbReference type="SAM" id="MobiDB-lite"/>
    </source>
</evidence>
<sequence length="194" mass="22283">MLKFLKQVGDYAKEAVQAGRYIGQGLSVTFDHMRRRPVTVQYPYEKLIPGERFRGRIHYEFDKCIACEVCVRVCPINLPVVDWEFDKATKKKKLNHYSIDFGVCIFCGNCVEYCPTNCLSMTEEYELATYDRHELNYDSVALGRLPYKVTDDPMVTPLRELVYLPKGVLDPHDLPANAPRPGARPEDLVEKTEA</sequence>
<feature type="chain" id="PRO_0000118715" description="NAD(P)H-quinone oxidoreductase subunit I">
    <location>
        <begin position="1"/>
        <end position="194"/>
    </location>
</feature>
<feature type="domain" description="4Fe-4S ferredoxin-type 1" evidence="1">
    <location>
        <begin position="55"/>
        <end position="84"/>
    </location>
</feature>
<feature type="domain" description="4Fe-4S ferredoxin-type 2" evidence="1">
    <location>
        <begin position="95"/>
        <end position="124"/>
    </location>
</feature>
<feature type="region of interest" description="Disordered" evidence="2">
    <location>
        <begin position="173"/>
        <end position="194"/>
    </location>
</feature>
<feature type="compositionally biased region" description="Basic and acidic residues" evidence="2">
    <location>
        <begin position="183"/>
        <end position="194"/>
    </location>
</feature>
<feature type="binding site" evidence="1">
    <location>
        <position position="64"/>
    </location>
    <ligand>
        <name>[4Fe-4S] cluster</name>
        <dbReference type="ChEBI" id="CHEBI:49883"/>
        <label>1</label>
    </ligand>
</feature>
<feature type="binding site" evidence="1">
    <location>
        <position position="67"/>
    </location>
    <ligand>
        <name>[4Fe-4S] cluster</name>
        <dbReference type="ChEBI" id="CHEBI:49883"/>
        <label>1</label>
    </ligand>
</feature>
<feature type="binding site" evidence="1">
    <location>
        <position position="70"/>
    </location>
    <ligand>
        <name>[4Fe-4S] cluster</name>
        <dbReference type="ChEBI" id="CHEBI:49883"/>
        <label>1</label>
    </ligand>
</feature>
<feature type="binding site" evidence="1">
    <location>
        <position position="74"/>
    </location>
    <ligand>
        <name>[4Fe-4S] cluster</name>
        <dbReference type="ChEBI" id="CHEBI:49883"/>
        <label>2</label>
    </ligand>
</feature>
<feature type="binding site" evidence="1">
    <location>
        <position position="104"/>
    </location>
    <ligand>
        <name>[4Fe-4S] cluster</name>
        <dbReference type="ChEBI" id="CHEBI:49883"/>
        <label>2</label>
    </ligand>
</feature>
<feature type="binding site" evidence="1">
    <location>
        <position position="107"/>
    </location>
    <ligand>
        <name>[4Fe-4S] cluster</name>
        <dbReference type="ChEBI" id="CHEBI:49883"/>
        <label>2</label>
    </ligand>
</feature>
<feature type="binding site" evidence="1">
    <location>
        <position position="110"/>
    </location>
    <ligand>
        <name>[4Fe-4S] cluster</name>
        <dbReference type="ChEBI" id="CHEBI:49883"/>
        <label>2</label>
    </ligand>
</feature>
<feature type="binding site" evidence="1">
    <location>
        <position position="114"/>
    </location>
    <ligand>
        <name>[4Fe-4S] cluster</name>
        <dbReference type="ChEBI" id="CHEBI:49883"/>
        <label>1</label>
    </ligand>
</feature>
<protein>
    <recommendedName>
        <fullName evidence="1">NAD(P)H-quinone oxidoreductase subunit I</fullName>
        <ecNumber evidence="1">7.1.1.-</ecNumber>
    </recommendedName>
    <alternativeName>
        <fullName evidence="1">NAD(P)H dehydrogenase I subunit I</fullName>
    </alternativeName>
    <alternativeName>
        <fullName evidence="1">NDH-1 subunit I</fullName>
        <shortName evidence="1">NDH-I</shortName>
    </alternativeName>
</protein>
<accession>Q9WWM6</accession>
<proteinExistence type="inferred from homology"/>
<comment type="function">
    <text evidence="1">NDH-1 shuttles electrons from an unknown electron donor, via FMN and iron-sulfur (Fe-S) centers, to quinones in the respiratory and/or the photosynthetic chain. The immediate electron acceptor for the enzyme in this species is believed to be plastoquinone. Couples the redox reaction to proton translocation, and thus conserves the redox energy in a proton gradient.</text>
</comment>
<comment type="catalytic activity">
    <reaction evidence="1">
        <text>a plastoquinone + NADH + (n+1) H(+)(in) = a plastoquinol + NAD(+) + n H(+)(out)</text>
        <dbReference type="Rhea" id="RHEA:42608"/>
        <dbReference type="Rhea" id="RHEA-COMP:9561"/>
        <dbReference type="Rhea" id="RHEA-COMP:9562"/>
        <dbReference type="ChEBI" id="CHEBI:15378"/>
        <dbReference type="ChEBI" id="CHEBI:17757"/>
        <dbReference type="ChEBI" id="CHEBI:57540"/>
        <dbReference type="ChEBI" id="CHEBI:57945"/>
        <dbReference type="ChEBI" id="CHEBI:62192"/>
    </reaction>
</comment>
<comment type="catalytic activity">
    <reaction evidence="1">
        <text>a plastoquinone + NADPH + (n+1) H(+)(in) = a plastoquinol + NADP(+) + n H(+)(out)</text>
        <dbReference type="Rhea" id="RHEA:42612"/>
        <dbReference type="Rhea" id="RHEA-COMP:9561"/>
        <dbReference type="Rhea" id="RHEA-COMP:9562"/>
        <dbReference type="ChEBI" id="CHEBI:15378"/>
        <dbReference type="ChEBI" id="CHEBI:17757"/>
        <dbReference type="ChEBI" id="CHEBI:57783"/>
        <dbReference type="ChEBI" id="CHEBI:58349"/>
        <dbReference type="ChEBI" id="CHEBI:62192"/>
    </reaction>
</comment>
<comment type="cofactor">
    <cofactor evidence="1">
        <name>[4Fe-4S] cluster</name>
        <dbReference type="ChEBI" id="CHEBI:49883"/>
    </cofactor>
    <text evidence="1">Binds 2 [4Fe-4S] clusters per subunit.</text>
</comment>
<comment type="subunit">
    <text evidence="1">NDH-1 is composed of at least 11 different subunits.</text>
</comment>
<comment type="subcellular location">
    <subcellularLocation>
        <location evidence="1">Cellular thylakoid membrane</location>
        <topology evidence="1">Peripheral membrane protein</topology>
    </subcellularLocation>
</comment>
<comment type="similarity">
    <text evidence="1">Belongs to the complex I 23 kDa subunit family.</text>
</comment>